<protein>
    <recommendedName>
        <fullName evidence="1">Large ribosomal subunit protein uL6</fullName>
    </recommendedName>
    <alternativeName>
        <fullName evidence="2">50S ribosomal protein L6</fullName>
    </alternativeName>
</protein>
<name>RL6_STRP2</name>
<dbReference type="EMBL" id="CP000410">
    <property type="protein sequence ID" value="ABJ55236.1"/>
    <property type="molecule type" value="Genomic_DNA"/>
</dbReference>
<dbReference type="RefSeq" id="WP_000086633.1">
    <property type="nucleotide sequence ID" value="NZ_JAMLJR010000002.1"/>
</dbReference>
<dbReference type="SMR" id="Q04MM1"/>
<dbReference type="PaxDb" id="373153-SPD_0208"/>
<dbReference type="KEGG" id="spd:SPD_0208"/>
<dbReference type="eggNOG" id="COG0097">
    <property type="taxonomic scope" value="Bacteria"/>
</dbReference>
<dbReference type="HOGENOM" id="CLU_065464_1_2_9"/>
<dbReference type="BioCyc" id="SPNE373153:G1G6V-231-MONOMER"/>
<dbReference type="Proteomes" id="UP000001452">
    <property type="component" value="Chromosome"/>
</dbReference>
<dbReference type="GO" id="GO:0022625">
    <property type="term" value="C:cytosolic large ribosomal subunit"/>
    <property type="evidence" value="ECO:0007669"/>
    <property type="project" value="TreeGrafter"/>
</dbReference>
<dbReference type="GO" id="GO:0019843">
    <property type="term" value="F:rRNA binding"/>
    <property type="evidence" value="ECO:0007669"/>
    <property type="project" value="UniProtKB-UniRule"/>
</dbReference>
<dbReference type="GO" id="GO:0003735">
    <property type="term" value="F:structural constituent of ribosome"/>
    <property type="evidence" value="ECO:0007669"/>
    <property type="project" value="InterPro"/>
</dbReference>
<dbReference type="GO" id="GO:0002181">
    <property type="term" value="P:cytoplasmic translation"/>
    <property type="evidence" value="ECO:0007669"/>
    <property type="project" value="TreeGrafter"/>
</dbReference>
<dbReference type="FunFam" id="3.90.930.12:FF:000001">
    <property type="entry name" value="50S ribosomal protein L6"/>
    <property type="match status" value="1"/>
</dbReference>
<dbReference type="FunFam" id="3.90.930.12:FF:000002">
    <property type="entry name" value="50S ribosomal protein L6"/>
    <property type="match status" value="1"/>
</dbReference>
<dbReference type="Gene3D" id="3.90.930.12">
    <property type="entry name" value="Ribosomal protein L6, alpha-beta domain"/>
    <property type="match status" value="2"/>
</dbReference>
<dbReference type="HAMAP" id="MF_01365_B">
    <property type="entry name" value="Ribosomal_uL6_B"/>
    <property type="match status" value="1"/>
</dbReference>
<dbReference type="InterPro" id="IPR000702">
    <property type="entry name" value="Ribosomal_uL6-like"/>
</dbReference>
<dbReference type="InterPro" id="IPR036789">
    <property type="entry name" value="Ribosomal_uL6-like_a/b-dom_sf"/>
</dbReference>
<dbReference type="InterPro" id="IPR020040">
    <property type="entry name" value="Ribosomal_uL6_a/b-dom"/>
</dbReference>
<dbReference type="InterPro" id="IPR019906">
    <property type="entry name" value="Ribosomal_uL6_bac-type"/>
</dbReference>
<dbReference type="InterPro" id="IPR002358">
    <property type="entry name" value="Ribosomal_uL6_CS"/>
</dbReference>
<dbReference type="NCBIfam" id="TIGR03654">
    <property type="entry name" value="L6_bact"/>
    <property type="match status" value="1"/>
</dbReference>
<dbReference type="PANTHER" id="PTHR11655">
    <property type="entry name" value="60S/50S RIBOSOMAL PROTEIN L6/L9"/>
    <property type="match status" value="1"/>
</dbReference>
<dbReference type="PANTHER" id="PTHR11655:SF14">
    <property type="entry name" value="LARGE RIBOSOMAL SUBUNIT PROTEIN UL6M"/>
    <property type="match status" value="1"/>
</dbReference>
<dbReference type="Pfam" id="PF00347">
    <property type="entry name" value="Ribosomal_L6"/>
    <property type="match status" value="2"/>
</dbReference>
<dbReference type="PIRSF" id="PIRSF002162">
    <property type="entry name" value="Ribosomal_L6"/>
    <property type="match status" value="1"/>
</dbReference>
<dbReference type="PRINTS" id="PR00059">
    <property type="entry name" value="RIBOSOMALL6"/>
</dbReference>
<dbReference type="SUPFAM" id="SSF56053">
    <property type="entry name" value="Ribosomal protein L6"/>
    <property type="match status" value="2"/>
</dbReference>
<dbReference type="PROSITE" id="PS00525">
    <property type="entry name" value="RIBOSOMAL_L6_1"/>
    <property type="match status" value="1"/>
</dbReference>
<reference key="1">
    <citation type="journal article" date="2007" name="J. Bacteriol.">
        <title>Genome sequence of Avery's virulent serotype 2 strain D39 of Streptococcus pneumoniae and comparison with that of unencapsulated laboratory strain R6.</title>
        <authorList>
            <person name="Lanie J.A."/>
            <person name="Ng W.-L."/>
            <person name="Kazmierczak K.M."/>
            <person name="Andrzejewski T.M."/>
            <person name="Davidsen T.M."/>
            <person name="Wayne K.J."/>
            <person name="Tettelin H."/>
            <person name="Glass J.I."/>
            <person name="Winkler M.E."/>
        </authorList>
    </citation>
    <scope>NUCLEOTIDE SEQUENCE [LARGE SCALE GENOMIC DNA]</scope>
    <source>
        <strain>D39 / NCTC 7466</strain>
    </source>
</reference>
<accession>Q04MM1</accession>
<gene>
    <name evidence="1" type="primary">rplF</name>
    <name type="ordered locus">SPD_0208</name>
</gene>
<evidence type="ECO:0000255" key="1">
    <source>
        <dbReference type="HAMAP-Rule" id="MF_01365"/>
    </source>
</evidence>
<evidence type="ECO:0000305" key="2"/>
<comment type="function">
    <text evidence="1">This protein binds to the 23S rRNA, and is important in its secondary structure. It is located near the subunit interface in the base of the L7/L12 stalk, and near the tRNA binding site of the peptidyltransferase center.</text>
</comment>
<comment type="subunit">
    <text evidence="1">Part of the 50S ribosomal subunit.</text>
</comment>
<comment type="similarity">
    <text evidence="1">Belongs to the universal ribosomal protein uL6 family.</text>
</comment>
<sequence>MSRIGNKVIVLPAGVELANNDNVVTVKGPKGELTREFSKDIEIRVEGTEVTLHRPNDSKEMKTIHGTTRALLNNMVVGVSEGFKKELEMRGVGYRAQLQGSKLVLAVGKSHPDEVEAPEGITFELPNPTTIVVSGISKEVVGQTAAYVRSLRSPEPYKGKGIRYVGEFVRRKEGKTGK</sequence>
<proteinExistence type="inferred from homology"/>
<keyword id="KW-1185">Reference proteome</keyword>
<keyword id="KW-0687">Ribonucleoprotein</keyword>
<keyword id="KW-0689">Ribosomal protein</keyword>
<keyword id="KW-0694">RNA-binding</keyword>
<keyword id="KW-0699">rRNA-binding</keyword>
<feature type="chain" id="PRO_1000055315" description="Large ribosomal subunit protein uL6">
    <location>
        <begin position="1"/>
        <end position="178"/>
    </location>
</feature>
<organism>
    <name type="scientific">Streptococcus pneumoniae serotype 2 (strain D39 / NCTC 7466)</name>
    <dbReference type="NCBI Taxonomy" id="373153"/>
    <lineage>
        <taxon>Bacteria</taxon>
        <taxon>Bacillati</taxon>
        <taxon>Bacillota</taxon>
        <taxon>Bacilli</taxon>
        <taxon>Lactobacillales</taxon>
        <taxon>Streptococcaceae</taxon>
        <taxon>Streptococcus</taxon>
    </lineage>
</organism>